<gene>
    <name type="primary">griH</name>
    <name type="ordered locus">SGR_4248</name>
</gene>
<sequence>MSSSPSPSPSSSSSSSASSSASSSPSSSSKLTWLDIRSVGEARAAIVQEALHHRVEALVADDPAHLADLPPTVAKVLLVVGKQIPEEFGEATVVVVDPSKHGVTPAELALKHPEIEFGRFVEIIDAPTLEDACESSRTEKWSVLLFRDPTKIPLEIVIAAAARASGSMVTIAQDLEEAEILFGVLEHGSDGVMMAPKTVGDAAELKRIAEAGIPNLNLTELRVVETSHIGMGERACVDTTTHFGEDEGILVGSHSKGMILCVSETHPLPYMPTRPFRVNAGAIHSYTLGRDERTNYLSELKTGSKLTAVDIKGNTRLVTVGRVKIETRPLISIDAEAPDGRRVNLILQDDWHVRVLGPGGTVLNSTELKPGDTVLGYLPVEDRHVGYPINEFCLEK</sequence>
<reference key="1">
    <citation type="journal article" date="2008" name="J. Bacteriol.">
        <title>Genome sequence of the streptomycin-producing microorganism Streptomyces griseus IFO 13350.</title>
        <authorList>
            <person name="Ohnishi Y."/>
            <person name="Ishikawa J."/>
            <person name="Hara H."/>
            <person name="Suzuki H."/>
            <person name="Ikenoya M."/>
            <person name="Ikeda H."/>
            <person name="Yamashita A."/>
            <person name="Hattori M."/>
            <person name="Horinouchi S."/>
        </authorList>
    </citation>
    <scope>NUCLEOTIDE SEQUENCE [LARGE SCALE GENOMIC DNA]</scope>
    <source>
        <strain>JCM 4626 / CBS 651.72 / NBRC 13350 / KCC S-0626 / ISP 5235</strain>
    </source>
</reference>
<accession>B1VTI7</accession>
<protein>
    <recommendedName>
        <fullName>3-amino-4-hydroxybenzoic acid synthase</fullName>
        <shortName>3,4-AHBA synthase</shortName>
        <ecNumber evidence="1">4.1.99.20</ecNumber>
    </recommendedName>
</protein>
<dbReference type="EC" id="4.1.99.20" evidence="1"/>
<dbReference type="EMBL" id="AP009493">
    <property type="protein sequence ID" value="BAG21077.1"/>
    <property type="molecule type" value="Genomic_DNA"/>
</dbReference>
<dbReference type="KEGG" id="sgr:SGR_4248"/>
<dbReference type="eggNOG" id="COG1465">
    <property type="taxonomic scope" value="Bacteria"/>
</dbReference>
<dbReference type="HOGENOM" id="CLU_056379_1_0_11"/>
<dbReference type="Proteomes" id="UP000001685">
    <property type="component" value="Chromosome"/>
</dbReference>
<dbReference type="GO" id="GO:0003856">
    <property type="term" value="F:3-dehydroquinate synthase activity"/>
    <property type="evidence" value="ECO:0007669"/>
    <property type="project" value="InterPro"/>
</dbReference>
<dbReference type="GO" id="GO:0016491">
    <property type="term" value="F:oxidoreductase activity"/>
    <property type="evidence" value="ECO:0007669"/>
    <property type="project" value="InterPro"/>
</dbReference>
<dbReference type="GO" id="GO:0008652">
    <property type="term" value="P:amino acid biosynthetic process"/>
    <property type="evidence" value="ECO:0007669"/>
    <property type="project" value="UniProtKB-KW"/>
</dbReference>
<dbReference type="GO" id="GO:0009073">
    <property type="term" value="P:aromatic amino acid family biosynthetic process"/>
    <property type="evidence" value="ECO:0007669"/>
    <property type="project" value="UniProtKB-KW"/>
</dbReference>
<dbReference type="InterPro" id="IPR002812">
    <property type="entry name" value="DHQ_synth"/>
</dbReference>
<dbReference type="NCBIfam" id="NF002625">
    <property type="entry name" value="PRK02290.1-3"/>
    <property type="match status" value="1"/>
</dbReference>
<dbReference type="PANTHER" id="PTHR33563">
    <property type="match status" value="1"/>
</dbReference>
<dbReference type="PANTHER" id="PTHR33563:SF1">
    <property type="entry name" value="3-DEHYDROQUINATE SYNTHASE"/>
    <property type="match status" value="1"/>
</dbReference>
<dbReference type="Pfam" id="PF01959">
    <property type="entry name" value="DHQS"/>
    <property type="match status" value="1"/>
</dbReference>
<comment type="function">
    <text evidence="1">Catalyzes the cyclization of 2-amino-4,5-dihydroxy-6-one-heptanoic acid-7-phosphate to yield 3-amino-4-hydroxybenzoic acid (3,4-AHBA).</text>
</comment>
<comment type="catalytic activity">
    <reaction evidence="1">
        <text>2-amino-4,5-dihydroxy-6-oxo-7-(phosphooxy)heptanoate = 3-amino-4-hydroxybenzoate + phosphate + 2 H2O + H(+)</text>
        <dbReference type="Rhea" id="RHEA:26317"/>
        <dbReference type="ChEBI" id="CHEBI:15377"/>
        <dbReference type="ChEBI" id="CHEBI:15378"/>
        <dbReference type="ChEBI" id="CHEBI:43474"/>
        <dbReference type="ChEBI" id="CHEBI:58898"/>
        <dbReference type="ChEBI" id="CHEBI:60005"/>
        <dbReference type="EC" id="4.1.99.20"/>
    </reaction>
</comment>
<comment type="cofactor">
    <cofactor evidence="1">
        <name>Mn(2+)</name>
        <dbReference type="ChEBI" id="CHEBI:29035"/>
    </cofactor>
</comment>
<comment type="subunit">
    <text evidence="1">Monomer.</text>
</comment>
<comment type="similarity">
    <text evidence="3">Belongs to the archaeal-type DHQ synthase family. GriH subfamily.</text>
</comment>
<proteinExistence type="inferred from homology"/>
<keyword id="KW-0028">Amino-acid biosynthesis</keyword>
<keyword id="KW-0057">Aromatic amino acid biosynthesis</keyword>
<keyword id="KW-0456">Lyase</keyword>
<keyword id="KW-0464">Manganese</keyword>
<name>GRIH_STRGG</name>
<evidence type="ECO:0000250" key="1">
    <source>
        <dbReference type="UniProtKB" id="A0JC76"/>
    </source>
</evidence>
<evidence type="ECO:0000256" key="2">
    <source>
        <dbReference type="SAM" id="MobiDB-lite"/>
    </source>
</evidence>
<evidence type="ECO:0000305" key="3"/>
<feature type="chain" id="PRO_0000361908" description="3-amino-4-hydroxybenzoic acid synthase">
    <location>
        <begin position="1"/>
        <end position="396"/>
    </location>
</feature>
<feature type="region of interest" description="Disordered" evidence="2">
    <location>
        <begin position="1"/>
        <end position="29"/>
    </location>
</feature>
<organism>
    <name type="scientific">Streptomyces griseus subsp. griseus (strain JCM 4626 / CBS 651.72 / NBRC 13350 / KCC S-0626 / ISP 5235)</name>
    <dbReference type="NCBI Taxonomy" id="455632"/>
    <lineage>
        <taxon>Bacteria</taxon>
        <taxon>Bacillati</taxon>
        <taxon>Actinomycetota</taxon>
        <taxon>Actinomycetes</taxon>
        <taxon>Kitasatosporales</taxon>
        <taxon>Streptomycetaceae</taxon>
        <taxon>Streptomyces</taxon>
    </lineage>
</organism>